<gene>
    <name type="ordered locus">At1g61340</name>
    <name type="ORF">T1F9.17</name>
</gene>
<evidence type="ECO:0000255" key="1">
    <source>
        <dbReference type="PROSITE-ProRule" id="PRU00080"/>
    </source>
</evidence>
<evidence type="ECO:0000305" key="2"/>
<reference key="1">
    <citation type="journal article" date="2000" name="Nature">
        <title>Sequence and analysis of chromosome 1 of the plant Arabidopsis thaliana.</title>
        <authorList>
            <person name="Theologis A."/>
            <person name="Ecker J.R."/>
            <person name="Palm C.J."/>
            <person name="Federspiel N.A."/>
            <person name="Kaul S."/>
            <person name="White O."/>
            <person name="Alonso J."/>
            <person name="Altafi H."/>
            <person name="Araujo R."/>
            <person name="Bowman C.L."/>
            <person name="Brooks S.Y."/>
            <person name="Buehler E."/>
            <person name="Chan A."/>
            <person name="Chao Q."/>
            <person name="Chen H."/>
            <person name="Cheuk R.F."/>
            <person name="Chin C.W."/>
            <person name="Chung M.K."/>
            <person name="Conn L."/>
            <person name="Conway A.B."/>
            <person name="Conway A.R."/>
            <person name="Creasy T.H."/>
            <person name="Dewar K."/>
            <person name="Dunn P."/>
            <person name="Etgu P."/>
            <person name="Feldblyum T.V."/>
            <person name="Feng J.-D."/>
            <person name="Fong B."/>
            <person name="Fujii C.Y."/>
            <person name="Gill J.E."/>
            <person name="Goldsmith A.D."/>
            <person name="Haas B."/>
            <person name="Hansen N.F."/>
            <person name="Hughes B."/>
            <person name="Huizar L."/>
            <person name="Hunter J.L."/>
            <person name="Jenkins J."/>
            <person name="Johnson-Hopson C."/>
            <person name="Khan S."/>
            <person name="Khaykin E."/>
            <person name="Kim C.J."/>
            <person name="Koo H.L."/>
            <person name="Kremenetskaia I."/>
            <person name="Kurtz D.B."/>
            <person name="Kwan A."/>
            <person name="Lam B."/>
            <person name="Langin-Hooper S."/>
            <person name="Lee A."/>
            <person name="Lee J.M."/>
            <person name="Lenz C.A."/>
            <person name="Li J.H."/>
            <person name="Li Y.-P."/>
            <person name="Lin X."/>
            <person name="Liu S.X."/>
            <person name="Liu Z.A."/>
            <person name="Luros J.S."/>
            <person name="Maiti R."/>
            <person name="Marziali A."/>
            <person name="Militscher J."/>
            <person name="Miranda M."/>
            <person name="Nguyen M."/>
            <person name="Nierman W.C."/>
            <person name="Osborne B.I."/>
            <person name="Pai G."/>
            <person name="Peterson J."/>
            <person name="Pham P.K."/>
            <person name="Rizzo M."/>
            <person name="Rooney T."/>
            <person name="Rowley D."/>
            <person name="Sakano H."/>
            <person name="Salzberg S.L."/>
            <person name="Schwartz J.R."/>
            <person name="Shinn P."/>
            <person name="Southwick A.M."/>
            <person name="Sun H."/>
            <person name="Tallon L.J."/>
            <person name="Tambunga G."/>
            <person name="Toriumi M.J."/>
            <person name="Town C.D."/>
            <person name="Utterback T."/>
            <person name="Van Aken S."/>
            <person name="Vaysberg M."/>
            <person name="Vysotskaia V.S."/>
            <person name="Walker M."/>
            <person name="Wu D."/>
            <person name="Yu G."/>
            <person name="Fraser C.M."/>
            <person name="Venter J.C."/>
            <person name="Davis R.W."/>
        </authorList>
    </citation>
    <scope>NUCLEOTIDE SEQUENCE [LARGE SCALE GENOMIC DNA]</scope>
    <source>
        <strain>cv. Columbia</strain>
    </source>
</reference>
<reference key="2">
    <citation type="journal article" date="2017" name="Plant J.">
        <title>Araport11: a complete reannotation of the Arabidopsis thaliana reference genome.</title>
        <authorList>
            <person name="Cheng C.Y."/>
            <person name="Krishnakumar V."/>
            <person name="Chan A.P."/>
            <person name="Thibaud-Nissen F."/>
            <person name="Schobel S."/>
            <person name="Town C.D."/>
        </authorList>
    </citation>
    <scope>GENOME REANNOTATION</scope>
    <source>
        <strain>cv. Columbia</strain>
    </source>
</reference>
<reference key="3">
    <citation type="journal article" date="2002" name="Science">
        <title>Functional annotation of a full-length Arabidopsis cDNA collection.</title>
        <authorList>
            <person name="Seki M."/>
            <person name="Narusaka M."/>
            <person name="Kamiya A."/>
            <person name="Ishida J."/>
            <person name="Satou M."/>
            <person name="Sakurai T."/>
            <person name="Nakajima M."/>
            <person name="Enju A."/>
            <person name="Akiyama K."/>
            <person name="Oono Y."/>
            <person name="Muramatsu M."/>
            <person name="Hayashizaki Y."/>
            <person name="Kawai J."/>
            <person name="Carninci P."/>
            <person name="Itoh M."/>
            <person name="Ishii Y."/>
            <person name="Arakawa T."/>
            <person name="Shibata K."/>
            <person name="Shinagawa A."/>
            <person name="Shinozaki K."/>
        </authorList>
    </citation>
    <scope>NUCLEOTIDE SEQUENCE [LARGE SCALE MRNA]</scope>
    <source>
        <strain>cv. Columbia</strain>
    </source>
</reference>
<reference key="4">
    <citation type="journal article" date="2003" name="Science">
        <title>Empirical analysis of transcriptional activity in the Arabidopsis genome.</title>
        <authorList>
            <person name="Yamada K."/>
            <person name="Lim J."/>
            <person name="Dale J.M."/>
            <person name="Chen H."/>
            <person name="Shinn P."/>
            <person name="Palm C.J."/>
            <person name="Southwick A.M."/>
            <person name="Wu H.C."/>
            <person name="Kim C.J."/>
            <person name="Nguyen M."/>
            <person name="Pham P.K."/>
            <person name="Cheuk R.F."/>
            <person name="Karlin-Newmann G."/>
            <person name="Liu S.X."/>
            <person name="Lam B."/>
            <person name="Sakano H."/>
            <person name="Wu T."/>
            <person name="Yu G."/>
            <person name="Miranda M."/>
            <person name="Quach H.L."/>
            <person name="Tripp M."/>
            <person name="Chang C.H."/>
            <person name="Lee J.M."/>
            <person name="Toriumi M.J."/>
            <person name="Chan M.M."/>
            <person name="Tang C.C."/>
            <person name="Onodera C.S."/>
            <person name="Deng J.M."/>
            <person name="Akiyama K."/>
            <person name="Ansari Y."/>
            <person name="Arakawa T."/>
            <person name="Banh J."/>
            <person name="Banno F."/>
            <person name="Bowser L."/>
            <person name="Brooks S.Y."/>
            <person name="Carninci P."/>
            <person name="Chao Q."/>
            <person name="Choy N."/>
            <person name="Enju A."/>
            <person name="Goldsmith A.D."/>
            <person name="Gurjal M."/>
            <person name="Hansen N.F."/>
            <person name="Hayashizaki Y."/>
            <person name="Johnson-Hopson C."/>
            <person name="Hsuan V.W."/>
            <person name="Iida K."/>
            <person name="Karnes M."/>
            <person name="Khan S."/>
            <person name="Koesema E."/>
            <person name="Ishida J."/>
            <person name="Jiang P.X."/>
            <person name="Jones T."/>
            <person name="Kawai J."/>
            <person name="Kamiya A."/>
            <person name="Meyers C."/>
            <person name="Nakajima M."/>
            <person name="Narusaka M."/>
            <person name="Seki M."/>
            <person name="Sakurai T."/>
            <person name="Satou M."/>
            <person name="Tamse R."/>
            <person name="Vaysberg M."/>
            <person name="Wallender E.K."/>
            <person name="Wong C."/>
            <person name="Yamamura Y."/>
            <person name="Yuan S."/>
            <person name="Shinozaki K."/>
            <person name="Davis R.W."/>
            <person name="Theologis A."/>
            <person name="Ecker J.R."/>
        </authorList>
    </citation>
    <scope>NUCLEOTIDE SEQUENCE [LARGE SCALE MRNA]</scope>
    <source>
        <strain>cv. Columbia</strain>
    </source>
</reference>
<sequence length="185" mass="21026">MALGKKRIVTQKPNLRQRRDVDNGGLGLGLEFVQYKRGFGRKRILISSGDEMEDSIFTSPVGKKLCDDKTTSVAEGQSRELEDLPLDILVRIICGVEHEDLKQLFHVSKTIREATMIAKQSHFAYSTPRKTSVFHHGRFGWDKPFDVEDDDEEIEAPGAPLQKRYRLSRINRNKDDSGVSVALFH</sequence>
<dbReference type="EMBL" id="AC004255">
    <property type="protein sequence ID" value="AAC13907.1"/>
    <property type="status" value="ALT_SEQ"/>
    <property type="molecule type" value="Genomic_DNA"/>
</dbReference>
<dbReference type="EMBL" id="CP002684">
    <property type="protein sequence ID" value="AEE33822.1"/>
    <property type="molecule type" value="Genomic_DNA"/>
</dbReference>
<dbReference type="EMBL" id="CP002684">
    <property type="protein sequence ID" value="AEE33823.2"/>
    <property type="molecule type" value="Genomic_DNA"/>
</dbReference>
<dbReference type="EMBL" id="AK118391">
    <property type="protein sequence ID" value="BAC43001.1"/>
    <property type="molecule type" value="mRNA"/>
</dbReference>
<dbReference type="EMBL" id="BT003706">
    <property type="protein sequence ID" value="AAO39934.1"/>
    <property type="molecule type" value="mRNA"/>
</dbReference>
<dbReference type="RefSeq" id="NP_001319283.1">
    <molecule id="Q8GX77-1"/>
    <property type="nucleotide sequence ID" value="NM_001333950.1"/>
</dbReference>
<dbReference type="RefSeq" id="NP_176329.1">
    <molecule id="Q8GX77-1"/>
    <property type="nucleotide sequence ID" value="NM_104815.3"/>
</dbReference>
<dbReference type="SMR" id="Q8GX77"/>
<dbReference type="BioGRID" id="27651">
    <property type="interactions" value="9"/>
</dbReference>
<dbReference type="FunCoup" id="Q8GX77">
    <property type="interactions" value="8"/>
</dbReference>
<dbReference type="IntAct" id="Q8GX77">
    <property type="interactions" value="8"/>
</dbReference>
<dbReference type="STRING" id="3702.Q8GX77"/>
<dbReference type="ProteomicsDB" id="230735">
    <molecule id="Q8GX77-1"/>
</dbReference>
<dbReference type="EnsemblPlants" id="AT1G61340.1">
    <molecule id="Q8GX77-1"/>
    <property type="protein sequence ID" value="AT1G61340.1"/>
    <property type="gene ID" value="AT1G61340"/>
</dbReference>
<dbReference type="EnsemblPlants" id="AT1G61340.2">
    <molecule id="Q8GX77-1"/>
    <property type="protein sequence ID" value="AT1G61340.2"/>
    <property type="gene ID" value="AT1G61340"/>
</dbReference>
<dbReference type="GeneID" id="842428"/>
<dbReference type="Gramene" id="AT1G61340.1">
    <molecule id="Q8GX77-1"/>
    <property type="protein sequence ID" value="AT1G61340.1"/>
    <property type="gene ID" value="AT1G61340"/>
</dbReference>
<dbReference type="Gramene" id="AT1G61340.2">
    <molecule id="Q8GX77-1"/>
    <property type="protein sequence ID" value="AT1G61340.2"/>
    <property type="gene ID" value="AT1G61340"/>
</dbReference>
<dbReference type="KEGG" id="ath:AT1G61340"/>
<dbReference type="Araport" id="AT1G61340"/>
<dbReference type="TAIR" id="AT1G61340">
    <property type="gene designation" value="FBS1"/>
</dbReference>
<dbReference type="InParanoid" id="Q8GX77"/>
<dbReference type="OMA" id="HFAYNTP"/>
<dbReference type="PhylomeDB" id="Q8GX77"/>
<dbReference type="PRO" id="PR:Q8GX77"/>
<dbReference type="Proteomes" id="UP000006548">
    <property type="component" value="Chromosome 1"/>
</dbReference>
<dbReference type="ExpressionAtlas" id="Q8GX77">
    <property type="expression patterns" value="baseline and differential"/>
</dbReference>
<dbReference type="GO" id="GO:0071456">
    <property type="term" value="P:cellular response to hypoxia"/>
    <property type="evidence" value="ECO:0007007"/>
    <property type="project" value="TAIR"/>
</dbReference>
<dbReference type="GO" id="GO:0009961">
    <property type="term" value="P:response to 1-aminocyclopropane-1-carboxylic acid"/>
    <property type="evidence" value="ECO:0000270"/>
    <property type="project" value="TAIR"/>
</dbReference>
<dbReference type="GO" id="GO:0009737">
    <property type="term" value="P:response to abscisic acid"/>
    <property type="evidence" value="ECO:0000270"/>
    <property type="project" value="TAIR"/>
</dbReference>
<dbReference type="GO" id="GO:0009617">
    <property type="term" value="P:response to bacterium"/>
    <property type="evidence" value="ECO:0000270"/>
    <property type="project" value="TAIR"/>
</dbReference>
<dbReference type="GO" id="GO:0009753">
    <property type="term" value="P:response to jasmonic acid"/>
    <property type="evidence" value="ECO:0000270"/>
    <property type="project" value="TAIR"/>
</dbReference>
<dbReference type="GO" id="GO:0006970">
    <property type="term" value="P:response to osmotic stress"/>
    <property type="evidence" value="ECO:0000270"/>
    <property type="project" value="TAIR"/>
</dbReference>
<dbReference type="GO" id="GO:0009751">
    <property type="term" value="P:response to salicylic acid"/>
    <property type="evidence" value="ECO:0000270"/>
    <property type="project" value="TAIR"/>
</dbReference>
<dbReference type="GO" id="GO:0009651">
    <property type="term" value="P:response to salt stress"/>
    <property type="evidence" value="ECO:0000270"/>
    <property type="project" value="TAIR"/>
</dbReference>
<dbReference type="GO" id="GO:0009611">
    <property type="term" value="P:response to wounding"/>
    <property type="evidence" value="ECO:0000270"/>
    <property type="project" value="TAIR"/>
</dbReference>
<dbReference type="InterPro" id="IPR001810">
    <property type="entry name" value="F-box_dom"/>
</dbReference>
<dbReference type="InterPro" id="IPR045286">
    <property type="entry name" value="FBS1-like"/>
</dbReference>
<dbReference type="PANTHER" id="PTHR34049:SF7">
    <property type="entry name" value="F-BOX DOMAIN-CONTAINING PROTEIN"/>
    <property type="match status" value="1"/>
</dbReference>
<dbReference type="PANTHER" id="PTHR34049">
    <property type="entry name" value="F-BOX PROTEIN SKIP27"/>
    <property type="match status" value="1"/>
</dbReference>
<dbReference type="PROSITE" id="PS50181">
    <property type="entry name" value="FBOX"/>
    <property type="match status" value="1"/>
</dbReference>
<keyword id="KW-0025">Alternative splicing</keyword>
<keyword id="KW-1185">Reference proteome</keyword>
<protein>
    <recommendedName>
        <fullName>F-box protein At1g61340</fullName>
    </recommendedName>
</protein>
<organism>
    <name type="scientific">Arabidopsis thaliana</name>
    <name type="common">Mouse-ear cress</name>
    <dbReference type="NCBI Taxonomy" id="3702"/>
    <lineage>
        <taxon>Eukaryota</taxon>
        <taxon>Viridiplantae</taxon>
        <taxon>Streptophyta</taxon>
        <taxon>Embryophyta</taxon>
        <taxon>Tracheophyta</taxon>
        <taxon>Spermatophyta</taxon>
        <taxon>Magnoliopsida</taxon>
        <taxon>eudicotyledons</taxon>
        <taxon>Gunneridae</taxon>
        <taxon>Pentapetalae</taxon>
        <taxon>rosids</taxon>
        <taxon>malvids</taxon>
        <taxon>Brassicales</taxon>
        <taxon>Brassicaceae</taxon>
        <taxon>Camelineae</taxon>
        <taxon>Arabidopsis</taxon>
    </lineage>
</organism>
<proteinExistence type="evidence at transcript level"/>
<name>FB316_ARATH</name>
<feature type="chain" id="PRO_0000396031" description="F-box protein At1g61340">
    <location>
        <begin position="1"/>
        <end position="185"/>
    </location>
</feature>
<feature type="domain" description="F-box" evidence="1">
    <location>
        <begin position="78"/>
        <end position="126"/>
    </location>
</feature>
<feature type="sequence conflict" description="In Ref. 4; AAO39934." evidence="2" ref="4">
    <original>Q</original>
    <variation>E</variation>
    <location>
        <position position="17"/>
    </location>
</feature>
<feature type="sequence conflict" description="In Ref. 4; AAO39934." evidence="2" ref="4">
    <original>K</original>
    <variation>N</variation>
    <location>
        <position position="143"/>
    </location>
</feature>
<comment type="alternative products">
    <event type="alternative splicing"/>
    <isoform>
        <id>Q8GX77-1</id>
        <name>1</name>
        <sequence type="displayed"/>
    </isoform>
    <text>A number of isoforms are produced. According to EST sequences.</text>
</comment>
<comment type="sequence caution" evidence="2">
    <conflict type="erroneous gene model prediction">
        <sequence resource="EMBL-CDS" id="AAC13907"/>
    </conflict>
</comment>
<accession>Q8GX77</accession>
<accession>F4HTJ7</accession>
<accession>O64786</accession>
<accession>Q84WH3</accession>